<name>Y1461_PASMU</name>
<comment type="subcellular location">
    <subcellularLocation>
        <location evidence="2">Cell membrane</location>
        <topology evidence="2">Multi-pass membrane protein</topology>
    </subcellularLocation>
</comment>
<comment type="similarity">
    <text evidence="2">Belongs to the UPF0324 family.</text>
</comment>
<gene>
    <name type="ordered locus">PM1461</name>
</gene>
<accession>Q9CKY9</accession>
<feature type="chain" id="PRO_0000157435" description="UPF0324 membrane protein PM1461">
    <location>
        <begin position="1"/>
        <end position="336"/>
    </location>
</feature>
<feature type="transmembrane region" description="Helical" evidence="1">
    <location>
        <begin position="5"/>
        <end position="23"/>
    </location>
</feature>
<feature type="transmembrane region" description="Helical" evidence="1">
    <location>
        <begin position="30"/>
        <end position="52"/>
    </location>
</feature>
<feature type="transmembrane region" description="Helical" evidence="1">
    <location>
        <begin position="62"/>
        <end position="84"/>
    </location>
</feature>
<feature type="transmembrane region" description="Helical" evidence="1">
    <location>
        <begin position="91"/>
        <end position="113"/>
    </location>
</feature>
<feature type="transmembrane region" description="Helical" evidence="1">
    <location>
        <begin position="123"/>
        <end position="140"/>
    </location>
</feature>
<feature type="transmembrane region" description="Helical" evidence="1">
    <location>
        <begin position="153"/>
        <end position="175"/>
    </location>
</feature>
<feature type="transmembrane region" description="Helical" evidence="1">
    <location>
        <begin position="221"/>
        <end position="238"/>
    </location>
</feature>
<feature type="transmembrane region" description="Helical" evidence="1">
    <location>
        <begin position="250"/>
        <end position="271"/>
    </location>
</feature>
<feature type="transmembrane region" description="Helical" evidence="1">
    <location>
        <begin position="275"/>
        <end position="297"/>
    </location>
</feature>
<feature type="transmembrane region" description="Helical" evidence="1">
    <location>
        <begin position="310"/>
        <end position="332"/>
    </location>
</feature>
<proteinExistence type="inferred from homology"/>
<reference key="1">
    <citation type="journal article" date="2001" name="Proc. Natl. Acad. Sci. U.S.A.">
        <title>Complete genomic sequence of Pasteurella multocida Pm70.</title>
        <authorList>
            <person name="May B.J."/>
            <person name="Zhang Q."/>
            <person name="Li L.L."/>
            <person name="Paustian M.L."/>
            <person name="Whittam T.S."/>
            <person name="Kapur V."/>
        </authorList>
    </citation>
    <scope>NUCLEOTIDE SEQUENCE [LARGE SCALE GENOMIC DNA]</scope>
    <source>
        <strain>Pm70</strain>
    </source>
</reference>
<evidence type="ECO:0000255" key="1"/>
<evidence type="ECO:0000305" key="2"/>
<sequence>MKKNTLFLGLVFIGILTFLVNLLAKTPFALNANLSALTIAILLGILFGNTFYPKISQYTAQGVIFAKGTLLRLGIILYGFRLTLQDISNVGINAIATDTIMLISTFLLTLWLGIRYLKMDKQIVYLTAGGCSICGAAAIMSMQPVTKAESHHVSIAVAVIVIFGTISMFLYPLMYPYLATWLNEHQFGIYIGSSVHEVAQVYAAGGNISPAVADTAVISKMIRVMMLAPFLLLVSWLLTKQNDQAKTTNISIPWFAFLFILMAVINSFSLIPAHIVAWIVEIDSLLLIAAMTALGLTTHISAIKQAGIKPLILGALVLCWLVIGGFFVNVGISQLF</sequence>
<dbReference type="EMBL" id="AE004439">
    <property type="protein sequence ID" value="AAK03545.1"/>
    <property type="molecule type" value="Genomic_DNA"/>
</dbReference>
<dbReference type="RefSeq" id="WP_010907174.1">
    <property type="nucleotide sequence ID" value="NC_002663.1"/>
</dbReference>
<dbReference type="STRING" id="272843.PM1461"/>
<dbReference type="EnsemblBacteria" id="AAK03545">
    <property type="protein sequence ID" value="AAK03545"/>
    <property type="gene ID" value="PM1461"/>
</dbReference>
<dbReference type="KEGG" id="pmu:PM1461"/>
<dbReference type="PATRIC" id="fig|272843.6.peg.1475"/>
<dbReference type="HOGENOM" id="CLU_033541_0_0_6"/>
<dbReference type="OrthoDB" id="9805703at2"/>
<dbReference type="Proteomes" id="UP000000809">
    <property type="component" value="Chromosome"/>
</dbReference>
<dbReference type="GO" id="GO:0005886">
    <property type="term" value="C:plasma membrane"/>
    <property type="evidence" value="ECO:0007669"/>
    <property type="project" value="UniProtKB-SubCell"/>
</dbReference>
<dbReference type="InterPro" id="IPR018383">
    <property type="entry name" value="UPF0324_pro"/>
</dbReference>
<dbReference type="InterPro" id="IPR004630">
    <property type="entry name" value="UPF0324_YeiH-like"/>
</dbReference>
<dbReference type="NCBIfam" id="TIGR00698">
    <property type="entry name" value="YeiH family putative sulfate export transporter"/>
    <property type="match status" value="1"/>
</dbReference>
<dbReference type="PANTHER" id="PTHR30106">
    <property type="entry name" value="INNER MEMBRANE PROTEIN YEIH-RELATED"/>
    <property type="match status" value="1"/>
</dbReference>
<dbReference type="PANTHER" id="PTHR30106:SF2">
    <property type="entry name" value="UPF0324 INNER MEMBRANE PROTEIN YEIH"/>
    <property type="match status" value="1"/>
</dbReference>
<dbReference type="Pfam" id="PF03601">
    <property type="entry name" value="Cons_hypoth698"/>
    <property type="match status" value="1"/>
</dbReference>
<organism>
    <name type="scientific">Pasteurella multocida (strain Pm70)</name>
    <dbReference type="NCBI Taxonomy" id="272843"/>
    <lineage>
        <taxon>Bacteria</taxon>
        <taxon>Pseudomonadati</taxon>
        <taxon>Pseudomonadota</taxon>
        <taxon>Gammaproteobacteria</taxon>
        <taxon>Pasteurellales</taxon>
        <taxon>Pasteurellaceae</taxon>
        <taxon>Pasteurella</taxon>
    </lineage>
</organism>
<protein>
    <recommendedName>
        <fullName>UPF0324 membrane protein PM1461</fullName>
    </recommendedName>
</protein>
<keyword id="KW-1003">Cell membrane</keyword>
<keyword id="KW-0472">Membrane</keyword>
<keyword id="KW-1185">Reference proteome</keyword>
<keyword id="KW-0812">Transmembrane</keyword>
<keyword id="KW-1133">Transmembrane helix</keyword>